<evidence type="ECO:0000250" key="1"/>
<evidence type="ECO:0000255" key="2">
    <source>
        <dbReference type="PROSITE-ProRule" id="PRU00044"/>
    </source>
</evidence>
<evidence type="ECO:0000303" key="3">
    <source>
    </source>
</evidence>
<evidence type="ECO:0000305" key="4"/>
<evidence type="ECO:0007829" key="5">
    <source>
        <dbReference type="PDB" id="1WYP"/>
    </source>
</evidence>
<organism>
    <name type="scientific">Homo sapiens</name>
    <name type="common">Human</name>
    <dbReference type="NCBI Taxonomy" id="9606"/>
    <lineage>
        <taxon>Eukaryota</taxon>
        <taxon>Metazoa</taxon>
        <taxon>Chordata</taxon>
        <taxon>Craniata</taxon>
        <taxon>Vertebrata</taxon>
        <taxon>Euteleostomi</taxon>
        <taxon>Mammalia</taxon>
        <taxon>Eutheria</taxon>
        <taxon>Euarchontoglires</taxon>
        <taxon>Primates</taxon>
        <taxon>Haplorrhini</taxon>
        <taxon>Catarrhini</taxon>
        <taxon>Hominidae</taxon>
        <taxon>Homo</taxon>
    </lineage>
</organism>
<dbReference type="EMBL" id="S80560">
    <property type="protein sequence ID" value="AAB35751.1"/>
    <property type="molecule type" value="mRNA"/>
</dbReference>
<dbReference type="EMBL" id="U37019">
    <property type="protein sequence ID" value="AAC51780.1"/>
    <property type="molecule type" value="mRNA"/>
</dbReference>
<dbReference type="EMBL" id="D17408">
    <property type="protein sequence ID" value="BAA04231.1"/>
    <property type="molecule type" value="mRNA"/>
</dbReference>
<dbReference type="EMBL" id="AK300837">
    <property type="protein sequence ID" value="BAG62488.1"/>
    <property type="molecule type" value="mRNA"/>
</dbReference>
<dbReference type="EMBL" id="AK313255">
    <property type="protein sequence ID" value="BAG36065.1"/>
    <property type="molecule type" value="mRNA"/>
</dbReference>
<dbReference type="EMBL" id="AC008481">
    <property type="status" value="NOT_ANNOTATED_CDS"/>
    <property type="molecule type" value="Genomic_DNA"/>
</dbReference>
<dbReference type="EMBL" id="CH471106">
    <property type="protein sequence ID" value="EAW84229.1"/>
    <property type="molecule type" value="Genomic_DNA"/>
</dbReference>
<dbReference type="EMBL" id="BC022015">
    <property type="protein sequence ID" value="AAH22015.1"/>
    <property type="molecule type" value="mRNA"/>
</dbReference>
<dbReference type="EMBL" id="BC036307">
    <property type="protein sequence ID" value="AAH36307.2"/>
    <property type="molecule type" value="mRNA"/>
</dbReference>
<dbReference type="EMBL" id="D86058">
    <property type="protein sequence ID" value="BAA12983.1"/>
    <property type="molecule type" value="mRNA"/>
</dbReference>
<dbReference type="EMBL" id="D85611">
    <property type="protein sequence ID" value="BAA19538.1"/>
    <property type="molecule type" value="Genomic_DNA"/>
</dbReference>
<dbReference type="CCDS" id="CCDS12263.1">
    <molecule id="P51911-1"/>
</dbReference>
<dbReference type="PIR" id="G02142">
    <property type="entry name" value="G02142"/>
</dbReference>
<dbReference type="PIR" id="JC4500">
    <property type="entry name" value="JC4500"/>
</dbReference>
<dbReference type="RefSeq" id="NP_001290.2">
    <molecule id="P51911-1"/>
    <property type="nucleotide sequence ID" value="NM_001299.5"/>
</dbReference>
<dbReference type="RefSeq" id="NP_001295270.1">
    <property type="nucleotide sequence ID" value="NM_001308341.1"/>
</dbReference>
<dbReference type="PDB" id="1WYP">
    <property type="method" value="NMR"/>
    <property type="chains" value="A=20-142"/>
</dbReference>
<dbReference type="PDBsum" id="1WYP"/>
<dbReference type="SMR" id="P51911"/>
<dbReference type="BioGRID" id="107664">
    <property type="interactions" value="42"/>
</dbReference>
<dbReference type="FunCoup" id="P51911">
    <property type="interactions" value="92"/>
</dbReference>
<dbReference type="IntAct" id="P51911">
    <property type="interactions" value="18"/>
</dbReference>
<dbReference type="MINT" id="P51911"/>
<dbReference type="STRING" id="9606.ENSP00000252456"/>
<dbReference type="GlyGen" id="P51911">
    <property type="glycosylation" value="1 site, 1 O-linked glycan (1 site)"/>
</dbReference>
<dbReference type="iPTMnet" id="P51911"/>
<dbReference type="MetOSite" id="P51911"/>
<dbReference type="PhosphoSitePlus" id="P51911"/>
<dbReference type="BioMuta" id="CNN1"/>
<dbReference type="DMDM" id="2829431"/>
<dbReference type="jPOST" id="P51911"/>
<dbReference type="MassIVE" id="P51911"/>
<dbReference type="PaxDb" id="9606-ENSP00000252456"/>
<dbReference type="PeptideAtlas" id="P51911"/>
<dbReference type="ProteomicsDB" id="5232"/>
<dbReference type="ProteomicsDB" id="56450">
    <molecule id="P51911-1"/>
</dbReference>
<dbReference type="Pumba" id="P51911"/>
<dbReference type="Antibodypedia" id="1965">
    <property type="antibodies" value="1151 antibodies from 43 providers"/>
</dbReference>
<dbReference type="DNASU" id="1264"/>
<dbReference type="Ensembl" id="ENST00000252456.7">
    <molecule id="P51911-1"/>
    <property type="protein sequence ID" value="ENSP00000252456.1"/>
    <property type="gene ID" value="ENSG00000130176.8"/>
</dbReference>
<dbReference type="GeneID" id="1264"/>
<dbReference type="KEGG" id="hsa:1264"/>
<dbReference type="MANE-Select" id="ENST00000252456.7">
    <property type="protein sequence ID" value="ENSP00000252456.1"/>
    <property type="RefSeq nucleotide sequence ID" value="NM_001299.6"/>
    <property type="RefSeq protein sequence ID" value="NP_001290.2"/>
</dbReference>
<dbReference type="AGR" id="HGNC:2155"/>
<dbReference type="CTD" id="1264"/>
<dbReference type="DisGeNET" id="1264"/>
<dbReference type="GeneCards" id="CNN1"/>
<dbReference type="HGNC" id="HGNC:2155">
    <property type="gene designation" value="CNN1"/>
</dbReference>
<dbReference type="HPA" id="ENSG00000130176">
    <property type="expression patterns" value="Tissue enhanced (endometrium, intestine, smooth muscle)"/>
</dbReference>
<dbReference type="MIM" id="600806">
    <property type="type" value="gene"/>
</dbReference>
<dbReference type="neXtProt" id="NX_P51911"/>
<dbReference type="OpenTargets" id="ENSG00000130176"/>
<dbReference type="PharmGKB" id="PA26665"/>
<dbReference type="VEuPathDB" id="HostDB:ENSG00000130176"/>
<dbReference type="eggNOG" id="KOG2046">
    <property type="taxonomic scope" value="Eukaryota"/>
</dbReference>
<dbReference type="GeneTree" id="ENSGT00940000159680"/>
<dbReference type="InParanoid" id="P51911"/>
<dbReference type="OMA" id="GEPTHNH"/>
<dbReference type="OrthoDB" id="21595at2759"/>
<dbReference type="PAN-GO" id="P51911">
    <property type="GO annotations" value="2 GO annotations based on evolutionary models"/>
</dbReference>
<dbReference type="PhylomeDB" id="P51911"/>
<dbReference type="TreeFam" id="TF313921"/>
<dbReference type="PathwayCommons" id="P51911"/>
<dbReference type="SignaLink" id="P51911"/>
<dbReference type="SIGNOR" id="P51911"/>
<dbReference type="BioGRID-ORCS" id="1264">
    <property type="hits" value="14 hits in 1158 CRISPR screens"/>
</dbReference>
<dbReference type="ChiTaRS" id="CNN1">
    <property type="organism name" value="human"/>
</dbReference>
<dbReference type="EvolutionaryTrace" id="P51911"/>
<dbReference type="GenomeRNAi" id="1264"/>
<dbReference type="Pharos" id="P51911">
    <property type="development level" value="Tbio"/>
</dbReference>
<dbReference type="PRO" id="PR:P51911"/>
<dbReference type="Proteomes" id="UP000005640">
    <property type="component" value="Chromosome 19"/>
</dbReference>
<dbReference type="RNAct" id="P51911">
    <property type="molecule type" value="protein"/>
</dbReference>
<dbReference type="Bgee" id="ENSG00000130176">
    <property type="expression patterns" value="Expressed in saphenous vein and 153 other cell types or tissues"/>
</dbReference>
<dbReference type="ExpressionAtlas" id="P51911">
    <property type="expression patterns" value="baseline and differential"/>
</dbReference>
<dbReference type="GO" id="GO:0015629">
    <property type="term" value="C:actin cytoskeleton"/>
    <property type="evidence" value="ECO:0000318"/>
    <property type="project" value="GO_Central"/>
</dbReference>
<dbReference type="GO" id="GO:0005856">
    <property type="term" value="C:cytoskeleton"/>
    <property type="evidence" value="ECO:0000314"/>
    <property type="project" value="MGI"/>
</dbReference>
<dbReference type="GO" id="GO:0005925">
    <property type="term" value="C:focal adhesion"/>
    <property type="evidence" value="ECO:0007005"/>
    <property type="project" value="UniProtKB"/>
</dbReference>
<dbReference type="GO" id="GO:0051015">
    <property type="term" value="F:actin filament binding"/>
    <property type="evidence" value="ECO:0000318"/>
    <property type="project" value="GO_Central"/>
</dbReference>
<dbReference type="GO" id="GO:0005516">
    <property type="term" value="F:calmodulin binding"/>
    <property type="evidence" value="ECO:0007669"/>
    <property type="project" value="UniProtKB-KW"/>
</dbReference>
<dbReference type="GO" id="GO:0007015">
    <property type="term" value="P:actin filament organization"/>
    <property type="evidence" value="ECO:0000318"/>
    <property type="project" value="GO_Central"/>
</dbReference>
<dbReference type="GO" id="GO:0031032">
    <property type="term" value="P:actomyosin structure organization"/>
    <property type="evidence" value="ECO:0007669"/>
    <property type="project" value="InterPro"/>
</dbReference>
<dbReference type="GO" id="GO:1904706">
    <property type="term" value="P:negative regulation of vascular associated smooth muscle cell proliferation"/>
    <property type="evidence" value="ECO:0000316"/>
    <property type="project" value="BHF-UCL"/>
</dbReference>
<dbReference type="GO" id="GO:0006940">
    <property type="term" value="P:regulation of smooth muscle contraction"/>
    <property type="evidence" value="ECO:0000304"/>
    <property type="project" value="UniProtKB"/>
</dbReference>
<dbReference type="CDD" id="cd21282">
    <property type="entry name" value="CH_CNN1"/>
    <property type="match status" value="1"/>
</dbReference>
<dbReference type="FunFam" id="1.10.418.10:FF:000040">
    <property type="entry name" value="Calponin"/>
    <property type="match status" value="1"/>
</dbReference>
<dbReference type="Gene3D" id="1.10.418.10">
    <property type="entry name" value="Calponin-like domain"/>
    <property type="match status" value="1"/>
</dbReference>
<dbReference type="InterPro" id="IPR050606">
    <property type="entry name" value="Calponin-like"/>
</dbReference>
<dbReference type="InterPro" id="IPR001997">
    <property type="entry name" value="Calponin/LIMCH1"/>
</dbReference>
<dbReference type="InterPro" id="IPR000557">
    <property type="entry name" value="Calponin_repeat"/>
</dbReference>
<dbReference type="InterPro" id="IPR001715">
    <property type="entry name" value="CH_dom"/>
</dbReference>
<dbReference type="InterPro" id="IPR036872">
    <property type="entry name" value="CH_dom_sf"/>
</dbReference>
<dbReference type="InterPro" id="IPR003096">
    <property type="entry name" value="SM22_calponin"/>
</dbReference>
<dbReference type="PANTHER" id="PTHR47385">
    <property type="entry name" value="CALPONIN"/>
    <property type="match status" value="1"/>
</dbReference>
<dbReference type="PANTHER" id="PTHR47385:SF18">
    <property type="entry name" value="CALPONIN"/>
    <property type="match status" value="1"/>
</dbReference>
<dbReference type="Pfam" id="PF00402">
    <property type="entry name" value="Calponin"/>
    <property type="match status" value="3"/>
</dbReference>
<dbReference type="Pfam" id="PF00307">
    <property type="entry name" value="CH"/>
    <property type="match status" value="1"/>
</dbReference>
<dbReference type="PRINTS" id="PR00889">
    <property type="entry name" value="CALPONIN"/>
</dbReference>
<dbReference type="PRINTS" id="PR00888">
    <property type="entry name" value="SM22CALPONIN"/>
</dbReference>
<dbReference type="SMART" id="SM00033">
    <property type="entry name" value="CH"/>
    <property type="match status" value="1"/>
</dbReference>
<dbReference type="SUPFAM" id="SSF47576">
    <property type="entry name" value="Calponin-homology domain, CH-domain"/>
    <property type="match status" value="1"/>
</dbReference>
<dbReference type="PROSITE" id="PS01052">
    <property type="entry name" value="CALPONIN_1"/>
    <property type="match status" value="3"/>
</dbReference>
<dbReference type="PROSITE" id="PS51122">
    <property type="entry name" value="CALPONIN_2"/>
    <property type="match status" value="3"/>
</dbReference>
<dbReference type="PROSITE" id="PS50021">
    <property type="entry name" value="CH"/>
    <property type="match status" value="1"/>
</dbReference>
<reference key="1">
    <citation type="journal article" date="1995" name="Biochem. Biophys. Res. Commun.">
        <title>Molecular cloning and gene mapping of human basic and acidic calponins.</title>
        <authorList>
            <person name="Maguchi M."/>
            <person name="Nishida W."/>
            <person name="Kohara K."/>
            <person name="Kuwano A."/>
            <person name="Kondo I."/>
            <person name="Hiwada K."/>
        </authorList>
    </citation>
    <scope>NUCLEOTIDE SEQUENCE [MRNA] (ISOFORM 1)</scope>
    <source>
        <tissue>Aorta</tissue>
    </source>
</reference>
<reference key="2">
    <citation type="journal article" date="1997" name="Gene">
        <title>Expression, genomic structure and high resolution mapping to 19p13.2 of the human smooth muscle cell calponin gene.</title>
        <authorList>
            <person name="Miano J.M."/>
            <person name="Krahe R."/>
            <person name="Garcia E."/>
            <person name="Elliott J.M."/>
            <person name="Olson E.N."/>
        </authorList>
    </citation>
    <scope>NUCLEOTIDE SEQUENCE [MRNA] (ISOFORM 1)</scope>
</reference>
<reference key="3">
    <citation type="submission" date="1997-01" db="EMBL/GenBank/DDBJ databases">
        <authorList>
            <person name="Takahashi K."/>
        </authorList>
    </citation>
    <scope>NUCLEOTIDE SEQUENCE [MRNA] (ISOFORM 1)</scope>
    <source>
        <tissue>Aorta</tissue>
    </source>
</reference>
<reference key="4">
    <citation type="journal article" date="2004" name="Nat. Genet.">
        <title>Complete sequencing and characterization of 21,243 full-length human cDNAs.</title>
        <authorList>
            <person name="Ota T."/>
            <person name="Suzuki Y."/>
            <person name="Nishikawa T."/>
            <person name="Otsuki T."/>
            <person name="Sugiyama T."/>
            <person name="Irie R."/>
            <person name="Wakamatsu A."/>
            <person name="Hayashi K."/>
            <person name="Sato H."/>
            <person name="Nagai K."/>
            <person name="Kimura K."/>
            <person name="Makita H."/>
            <person name="Sekine M."/>
            <person name="Obayashi M."/>
            <person name="Nishi T."/>
            <person name="Shibahara T."/>
            <person name="Tanaka T."/>
            <person name="Ishii S."/>
            <person name="Yamamoto J."/>
            <person name="Saito K."/>
            <person name="Kawai Y."/>
            <person name="Isono Y."/>
            <person name="Nakamura Y."/>
            <person name="Nagahari K."/>
            <person name="Murakami K."/>
            <person name="Yasuda T."/>
            <person name="Iwayanagi T."/>
            <person name="Wagatsuma M."/>
            <person name="Shiratori A."/>
            <person name="Sudo H."/>
            <person name="Hosoiri T."/>
            <person name="Kaku Y."/>
            <person name="Kodaira H."/>
            <person name="Kondo H."/>
            <person name="Sugawara M."/>
            <person name="Takahashi M."/>
            <person name="Kanda K."/>
            <person name="Yokoi T."/>
            <person name="Furuya T."/>
            <person name="Kikkawa E."/>
            <person name="Omura Y."/>
            <person name="Abe K."/>
            <person name="Kamihara K."/>
            <person name="Katsuta N."/>
            <person name="Sato K."/>
            <person name="Tanikawa M."/>
            <person name="Yamazaki M."/>
            <person name="Ninomiya K."/>
            <person name="Ishibashi T."/>
            <person name="Yamashita H."/>
            <person name="Murakawa K."/>
            <person name="Fujimori K."/>
            <person name="Tanai H."/>
            <person name="Kimata M."/>
            <person name="Watanabe M."/>
            <person name="Hiraoka S."/>
            <person name="Chiba Y."/>
            <person name="Ishida S."/>
            <person name="Ono Y."/>
            <person name="Takiguchi S."/>
            <person name="Watanabe S."/>
            <person name="Yosida M."/>
            <person name="Hotuta T."/>
            <person name="Kusano J."/>
            <person name="Kanehori K."/>
            <person name="Takahashi-Fujii A."/>
            <person name="Hara H."/>
            <person name="Tanase T.-O."/>
            <person name="Nomura Y."/>
            <person name="Togiya S."/>
            <person name="Komai F."/>
            <person name="Hara R."/>
            <person name="Takeuchi K."/>
            <person name="Arita M."/>
            <person name="Imose N."/>
            <person name="Musashino K."/>
            <person name="Yuuki H."/>
            <person name="Oshima A."/>
            <person name="Sasaki N."/>
            <person name="Aotsuka S."/>
            <person name="Yoshikawa Y."/>
            <person name="Matsunawa H."/>
            <person name="Ichihara T."/>
            <person name="Shiohata N."/>
            <person name="Sano S."/>
            <person name="Moriya S."/>
            <person name="Momiyama H."/>
            <person name="Satoh N."/>
            <person name="Takami S."/>
            <person name="Terashima Y."/>
            <person name="Suzuki O."/>
            <person name="Nakagawa S."/>
            <person name="Senoh A."/>
            <person name="Mizoguchi H."/>
            <person name="Goto Y."/>
            <person name="Shimizu F."/>
            <person name="Wakebe H."/>
            <person name="Hishigaki H."/>
            <person name="Watanabe T."/>
            <person name="Sugiyama A."/>
            <person name="Takemoto M."/>
            <person name="Kawakami B."/>
            <person name="Yamazaki M."/>
            <person name="Watanabe K."/>
            <person name="Kumagai A."/>
            <person name="Itakura S."/>
            <person name="Fukuzumi Y."/>
            <person name="Fujimori Y."/>
            <person name="Komiyama M."/>
            <person name="Tashiro H."/>
            <person name="Tanigami A."/>
            <person name="Fujiwara T."/>
            <person name="Ono T."/>
            <person name="Yamada K."/>
            <person name="Fujii Y."/>
            <person name="Ozaki K."/>
            <person name="Hirao M."/>
            <person name="Ohmori Y."/>
            <person name="Kawabata A."/>
            <person name="Hikiji T."/>
            <person name="Kobatake N."/>
            <person name="Inagaki H."/>
            <person name="Ikema Y."/>
            <person name="Okamoto S."/>
            <person name="Okitani R."/>
            <person name="Kawakami T."/>
            <person name="Noguchi S."/>
            <person name="Itoh T."/>
            <person name="Shigeta K."/>
            <person name="Senba T."/>
            <person name="Matsumura K."/>
            <person name="Nakajima Y."/>
            <person name="Mizuno T."/>
            <person name="Morinaga M."/>
            <person name="Sasaki M."/>
            <person name="Togashi T."/>
            <person name="Oyama M."/>
            <person name="Hata H."/>
            <person name="Watanabe M."/>
            <person name="Komatsu T."/>
            <person name="Mizushima-Sugano J."/>
            <person name="Satoh T."/>
            <person name="Shirai Y."/>
            <person name="Takahashi Y."/>
            <person name="Nakagawa K."/>
            <person name="Okumura K."/>
            <person name="Nagase T."/>
            <person name="Nomura N."/>
            <person name="Kikuchi H."/>
            <person name="Masuho Y."/>
            <person name="Yamashita R."/>
            <person name="Nakai K."/>
            <person name="Yada T."/>
            <person name="Nakamura Y."/>
            <person name="Ohara O."/>
            <person name="Isogai T."/>
            <person name="Sugano S."/>
        </authorList>
    </citation>
    <scope>NUCLEOTIDE SEQUENCE [LARGE SCALE MRNA] (ISOFORMS 1 AND 2)</scope>
    <source>
        <tissue>Pericardium</tissue>
        <tissue>Small intestine</tissue>
    </source>
</reference>
<reference key="5">
    <citation type="journal article" date="2004" name="Nature">
        <title>The DNA sequence and biology of human chromosome 19.</title>
        <authorList>
            <person name="Grimwood J."/>
            <person name="Gordon L.A."/>
            <person name="Olsen A.S."/>
            <person name="Terry A."/>
            <person name="Schmutz J."/>
            <person name="Lamerdin J.E."/>
            <person name="Hellsten U."/>
            <person name="Goodstein D."/>
            <person name="Couronne O."/>
            <person name="Tran-Gyamfi M."/>
            <person name="Aerts A."/>
            <person name="Altherr M."/>
            <person name="Ashworth L."/>
            <person name="Bajorek E."/>
            <person name="Black S."/>
            <person name="Branscomb E."/>
            <person name="Caenepeel S."/>
            <person name="Carrano A.V."/>
            <person name="Caoile C."/>
            <person name="Chan Y.M."/>
            <person name="Christensen M."/>
            <person name="Cleland C.A."/>
            <person name="Copeland A."/>
            <person name="Dalin E."/>
            <person name="Dehal P."/>
            <person name="Denys M."/>
            <person name="Detter J.C."/>
            <person name="Escobar J."/>
            <person name="Flowers D."/>
            <person name="Fotopulos D."/>
            <person name="Garcia C."/>
            <person name="Georgescu A.M."/>
            <person name="Glavina T."/>
            <person name="Gomez M."/>
            <person name="Gonzales E."/>
            <person name="Groza M."/>
            <person name="Hammon N."/>
            <person name="Hawkins T."/>
            <person name="Haydu L."/>
            <person name="Ho I."/>
            <person name="Huang W."/>
            <person name="Israni S."/>
            <person name="Jett J."/>
            <person name="Kadner K."/>
            <person name="Kimball H."/>
            <person name="Kobayashi A."/>
            <person name="Larionov V."/>
            <person name="Leem S.-H."/>
            <person name="Lopez F."/>
            <person name="Lou Y."/>
            <person name="Lowry S."/>
            <person name="Malfatti S."/>
            <person name="Martinez D."/>
            <person name="McCready P.M."/>
            <person name="Medina C."/>
            <person name="Morgan J."/>
            <person name="Nelson K."/>
            <person name="Nolan M."/>
            <person name="Ovcharenko I."/>
            <person name="Pitluck S."/>
            <person name="Pollard M."/>
            <person name="Popkie A.P."/>
            <person name="Predki P."/>
            <person name="Quan G."/>
            <person name="Ramirez L."/>
            <person name="Rash S."/>
            <person name="Retterer J."/>
            <person name="Rodriguez A."/>
            <person name="Rogers S."/>
            <person name="Salamov A."/>
            <person name="Salazar A."/>
            <person name="She X."/>
            <person name="Smith D."/>
            <person name="Slezak T."/>
            <person name="Solovyev V."/>
            <person name="Thayer N."/>
            <person name="Tice H."/>
            <person name="Tsai M."/>
            <person name="Ustaszewska A."/>
            <person name="Vo N."/>
            <person name="Wagner M."/>
            <person name="Wheeler J."/>
            <person name="Wu K."/>
            <person name="Xie G."/>
            <person name="Yang J."/>
            <person name="Dubchak I."/>
            <person name="Furey T.S."/>
            <person name="DeJong P."/>
            <person name="Dickson M."/>
            <person name="Gordon D."/>
            <person name="Eichler E.E."/>
            <person name="Pennacchio L.A."/>
            <person name="Richardson P."/>
            <person name="Stubbs L."/>
            <person name="Rokhsar D.S."/>
            <person name="Myers R.M."/>
            <person name="Rubin E.M."/>
            <person name="Lucas S.M."/>
        </authorList>
    </citation>
    <scope>NUCLEOTIDE SEQUENCE [LARGE SCALE GENOMIC DNA]</scope>
</reference>
<reference key="6">
    <citation type="submission" date="2005-07" db="EMBL/GenBank/DDBJ databases">
        <authorList>
            <person name="Mural R.J."/>
            <person name="Istrail S."/>
            <person name="Sutton G.G."/>
            <person name="Florea L."/>
            <person name="Halpern A.L."/>
            <person name="Mobarry C.M."/>
            <person name="Lippert R."/>
            <person name="Walenz B."/>
            <person name="Shatkay H."/>
            <person name="Dew I."/>
            <person name="Miller J.R."/>
            <person name="Flanigan M.J."/>
            <person name="Edwards N.J."/>
            <person name="Bolanos R."/>
            <person name="Fasulo D."/>
            <person name="Halldorsson B.V."/>
            <person name="Hannenhalli S."/>
            <person name="Turner R."/>
            <person name="Yooseph S."/>
            <person name="Lu F."/>
            <person name="Nusskern D.R."/>
            <person name="Shue B.C."/>
            <person name="Zheng X.H."/>
            <person name="Zhong F."/>
            <person name="Delcher A.L."/>
            <person name="Huson D.H."/>
            <person name="Kravitz S.A."/>
            <person name="Mouchard L."/>
            <person name="Reinert K."/>
            <person name="Remington K.A."/>
            <person name="Clark A.G."/>
            <person name="Waterman M.S."/>
            <person name="Eichler E.E."/>
            <person name="Adams M.D."/>
            <person name="Hunkapiller M.W."/>
            <person name="Myers E.W."/>
            <person name="Venter J.C."/>
        </authorList>
    </citation>
    <scope>NUCLEOTIDE SEQUENCE [LARGE SCALE GENOMIC DNA]</scope>
</reference>
<reference key="7">
    <citation type="journal article" date="2004" name="Genome Res.">
        <title>The status, quality, and expansion of the NIH full-length cDNA project: the Mammalian Gene Collection (MGC).</title>
        <authorList>
            <consortium name="The MGC Project Team"/>
        </authorList>
    </citation>
    <scope>NUCLEOTIDE SEQUENCE [LARGE SCALE MRNA] (ISOFORM 1)</scope>
    <source>
        <tissue>Brain</tissue>
        <tissue>Testis</tissue>
    </source>
</reference>
<reference key="8">
    <citation type="submission" date="1996-06" db="EMBL/GenBank/DDBJ databases">
        <title>Systematic RLGS-M screening and identification of genes on chromosome 21 regulated by the dosage compensation in Down syndrome.</title>
        <authorList>
            <person name="Kuromitsu J."/>
            <person name="Hayashizaki Y."/>
        </authorList>
    </citation>
    <scope>NUCLEOTIDE SEQUENCE [MRNA] OF 17-297 (ISOFORM 1)</scope>
    <source>
        <tissue>Placenta</tissue>
    </source>
</reference>
<reference key="9">
    <citation type="submission" date="1996-05" db="EMBL/GenBank/DDBJ databases">
        <authorList>
            <person name="Takahashi K."/>
        </authorList>
    </citation>
    <scope>NUCLEOTIDE SEQUENCE [GENOMIC DNA] OF 1-21</scope>
</reference>
<reference key="10">
    <citation type="submission" date="2005-08" db="PDB data bank">
        <title>Solution structure of the CH domain of human calponin 1.</title>
        <authorList>
            <consortium name="RIKEN structural genomics initiative (RSGI)"/>
        </authorList>
    </citation>
    <scope>STRUCTURE BY NMR OF 20-142</scope>
</reference>
<gene>
    <name type="primary">CNN1</name>
</gene>
<proteinExistence type="evidence at protein level"/>
<comment type="function">
    <text evidence="1">Thin filament-associated protein that is implicated in the regulation and modulation of smooth muscle contraction. It is capable of binding to actin, calmodulin and tropomyosin. The interaction of calponin with actin inhibits the actomyosin Mg-ATPase activity (By similarity).</text>
</comment>
<comment type="subunit">
    <text evidence="1">Part of cGMP kinase signaling complex at least composed of ACTA2/alpha-actin, CNN1/calponin H1, PLN/phospholamban, PRKG1 and ITPR1.</text>
</comment>
<comment type="interaction">
    <interactant intactId="EBI-2873130">
        <id>P51911</id>
    </interactant>
    <interactant intactId="EBI-12260130">
        <id>Q96EZ4</id>
        <label>MYEOV</label>
    </interactant>
    <organismsDiffer>false</organismsDiffer>
    <experiments>2</experiments>
</comment>
<comment type="interaction">
    <interactant intactId="EBI-2873130">
        <id>P51911</id>
    </interactant>
    <interactant intactId="EBI-1245626">
        <id>P0C1Z6</id>
        <label>TFPT</label>
    </interactant>
    <organismsDiffer>false</organismsDiffer>
    <experiments>4</experiments>
</comment>
<comment type="alternative products">
    <event type="alternative splicing"/>
    <isoform>
        <id>P51911-1</id>
        <name>1</name>
        <sequence type="displayed"/>
    </isoform>
    <isoform>
        <id>P51911-2</id>
        <name>2</name>
        <sequence type="described" ref="VSP_056948"/>
    </isoform>
</comment>
<comment type="tissue specificity">
    <text>Smooth muscle, and tissues containing significant amounts of smooth muscle.</text>
</comment>
<comment type="similarity">
    <text evidence="4">Belongs to the calponin family.</text>
</comment>
<name>CNN1_HUMAN</name>
<sequence>MSSAHFNRGPAYGLSAEVKNKLAQKYDHQREQELREWIEGVTGRRIGNNFMDGLKDGIILCEFINKLQPGSVKKINESTQNWHQLENIGNFIKAITKYGVKPHDIFEANDLFENTNHTQVQSTLLALASMAKTKGNKVNVGVKYAEKQERKFEPGKLREGRNIIGLQMGTNKFASQQGMTAYGTRRHLYDPKLGTDQPLDQATISLQMGTNKGASQAGMTAPGTKRQIFEPGLGMEHCDTLNVSLQMGSNKGASQRGMTVYGLPRQVYDPKYCLTPEYPELGEPAHNHHAHNYYNSA</sequence>
<accession>P51911</accession>
<accession>B2R868</accession>
<accession>B4DUX6</accession>
<accession>O00638</accession>
<accession>Q15416</accession>
<accession>Q8IY93</accession>
<accession>Q99438</accession>
<feature type="chain" id="PRO_0000204767" description="Calponin-1">
    <location>
        <begin position="1"/>
        <end position="297"/>
    </location>
</feature>
<feature type="domain" description="Calponin-homology (CH)" evidence="2">
    <location>
        <begin position="28"/>
        <end position="131"/>
    </location>
</feature>
<feature type="repeat" description="Calponin-like 1">
    <location>
        <begin position="164"/>
        <end position="189"/>
    </location>
</feature>
<feature type="repeat" description="Calponin-like 2">
    <location>
        <begin position="204"/>
        <end position="229"/>
    </location>
</feature>
<feature type="repeat" description="Calponin-like 3">
    <location>
        <begin position="243"/>
        <end position="268"/>
    </location>
</feature>
<feature type="modified residue" description="Phosphothreonine; by ROCK2" evidence="1">
    <location>
        <position position="170"/>
    </location>
</feature>
<feature type="modified residue" description="Phosphoserine; by ROCK2" evidence="1">
    <location>
        <position position="175"/>
    </location>
</feature>
<feature type="modified residue" description="Phosphothreonine; by ROCK2" evidence="1">
    <location>
        <position position="180"/>
    </location>
</feature>
<feature type="modified residue" description="Phosphothreonine; by ROCK2" evidence="1">
    <location>
        <position position="184"/>
    </location>
</feature>
<feature type="modified residue" description="Phosphothreonine; by ROCK2" evidence="1">
    <location>
        <position position="259"/>
    </location>
</feature>
<feature type="splice variant" id="VSP_056948" description="In isoform 2." evidence="3">
    <original>MSSAHFNRGPAYGLSAEVKNK</original>
    <variation>M</variation>
    <location>
        <begin position="1"/>
        <end position="21"/>
    </location>
</feature>
<feature type="sequence conflict" description="In Ref. 8; BAA12983." evidence="4" ref="8">
    <original>G</original>
    <variation>S</variation>
    <location>
        <position position="57"/>
    </location>
</feature>
<feature type="sequence conflict" description="In Ref. 8; BAA12983." evidence="4" ref="8">
    <original>E</original>
    <variation>G</variation>
    <location>
        <position position="149"/>
    </location>
</feature>
<feature type="sequence conflict" description="In Ref. 2; AAC51780." evidence="4" ref="2">
    <original>T</original>
    <variation>S</variation>
    <location>
        <position position="170"/>
    </location>
</feature>
<feature type="sequence conflict" description="In Ref. 8; BAA12983." evidence="4" ref="8">
    <original>Q</original>
    <variation>P</variation>
    <location>
        <position position="266"/>
    </location>
</feature>
<feature type="helix" evidence="5">
    <location>
        <begin position="28"/>
        <end position="41"/>
    </location>
</feature>
<feature type="helix" evidence="5">
    <location>
        <begin position="52"/>
        <end position="55"/>
    </location>
</feature>
<feature type="helix" evidence="5">
    <location>
        <begin position="58"/>
        <end position="67"/>
    </location>
</feature>
<feature type="strand" evidence="5">
    <location>
        <begin position="71"/>
        <end position="73"/>
    </location>
</feature>
<feature type="helix" evidence="5">
    <location>
        <begin position="82"/>
        <end position="98"/>
    </location>
</feature>
<feature type="helix" evidence="5">
    <location>
        <begin position="102"/>
        <end position="104"/>
    </location>
</feature>
<feature type="helix" evidence="5">
    <location>
        <begin position="108"/>
        <end position="112"/>
    </location>
</feature>
<feature type="helix" evidence="5">
    <location>
        <begin position="118"/>
        <end position="134"/>
    </location>
</feature>
<protein>
    <recommendedName>
        <fullName>Calponin-1</fullName>
    </recommendedName>
    <alternativeName>
        <fullName>Basic calponin</fullName>
    </alternativeName>
    <alternativeName>
        <fullName>Calponin H1, smooth muscle</fullName>
    </alternativeName>
</protein>
<keyword id="KW-0002">3D-structure</keyword>
<keyword id="KW-0009">Actin-binding</keyword>
<keyword id="KW-0025">Alternative splicing</keyword>
<keyword id="KW-0112">Calmodulin-binding</keyword>
<keyword id="KW-0597">Phosphoprotein</keyword>
<keyword id="KW-1267">Proteomics identification</keyword>
<keyword id="KW-1185">Reference proteome</keyword>
<keyword id="KW-0677">Repeat</keyword>